<reference key="1">
    <citation type="journal article" date="2006" name="Proc. Natl. Acad. Sci. U.S.A.">
        <title>Identification of genes subject to positive selection in uropathogenic strains of Escherichia coli: a comparative genomics approach.</title>
        <authorList>
            <person name="Chen S.L."/>
            <person name="Hung C.-S."/>
            <person name="Xu J."/>
            <person name="Reigstad C.S."/>
            <person name="Magrini V."/>
            <person name="Sabo A."/>
            <person name="Blasiar D."/>
            <person name="Bieri T."/>
            <person name="Meyer R.R."/>
            <person name="Ozersky P."/>
            <person name="Armstrong J.R."/>
            <person name="Fulton R.S."/>
            <person name="Latreille J.P."/>
            <person name="Spieth J."/>
            <person name="Hooton T.M."/>
            <person name="Mardis E.R."/>
            <person name="Hultgren S.J."/>
            <person name="Gordon J.I."/>
        </authorList>
    </citation>
    <scope>NUCLEOTIDE SEQUENCE [LARGE SCALE GENOMIC DNA]</scope>
    <source>
        <strain>UTI89 / UPEC</strain>
    </source>
</reference>
<gene>
    <name evidence="1" type="primary">dapD</name>
    <name type="ordered locus">UTI89_C0180</name>
</gene>
<name>DAPD_ECOUT</name>
<proteinExistence type="inferred from homology"/>
<feature type="chain" id="PRO_1000047139" description="2,3,4,5-tetrahydropyridine-2,6-dicarboxylate N-succinyltransferase">
    <location>
        <begin position="1"/>
        <end position="274"/>
    </location>
</feature>
<feature type="binding site" evidence="1">
    <location>
        <position position="104"/>
    </location>
    <ligand>
        <name>substrate</name>
    </ligand>
</feature>
<feature type="binding site" evidence="1">
    <location>
        <position position="141"/>
    </location>
    <ligand>
        <name>substrate</name>
    </ligand>
</feature>
<accession>Q1RG24</accession>
<protein>
    <recommendedName>
        <fullName evidence="1">2,3,4,5-tetrahydropyridine-2,6-dicarboxylate N-succinyltransferase</fullName>
        <ecNumber evidence="1">2.3.1.117</ecNumber>
    </recommendedName>
    <alternativeName>
        <fullName evidence="1">Tetrahydrodipicolinate N-succinyltransferase</fullName>
        <shortName evidence="1">THDP succinyltransferase</shortName>
        <shortName evidence="1">THP succinyltransferase</shortName>
        <shortName evidence="1">Tetrahydropicolinate succinylase</shortName>
    </alternativeName>
</protein>
<sequence>MQQLQNIIETAFERRAEITPANADTVTREAVNQVIALLDSGALRVAEKIDGQWVTHQWLKKAVLLSFRINDNQVIEGAESRYFDKVPMKFANYDEARFQKEGFRVVPPAAVRQGAFIARNTVLMPSYVNIGAYVDEGTMVDTWATVGSCAQIGKNVHLSGGVGIGGVLEPLQANPTIIEDNCFIGARSEVVEGVIVEEGSVISMGVYIGQSTRIYDRETGEIHYGRVPAGSVVVSGNLPSKDGKYSLYCAVIVKKVDAKTRGKVGINELLRTID</sequence>
<keyword id="KW-0012">Acyltransferase</keyword>
<keyword id="KW-0028">Amino-acid biosynthesis</keyword>
<keyword id="KW-0963">Cytoplasm</keyword>
<keyword id="KW-0220">Diaminopimelate biosynthesis</keyword>
<keyword id="KW-0457">Lysine biosynthesis</keyword>
<keyword id="KW-0677">Repeat</keyword>
<keyword id="KW-0808">Transferase</keyword>
<organism>
    <name type="scientific">Escherichia coli (strain UTI89 / UPEC)</name>
    <dbReference type="NCBI Taxonomy" id="364106"/>
    <lineage>
        <taxon>Bacteria</taxon>
        <taxon>Pseudomonadati</taxon>
        <taxon>Pseudomonadota</taxon>
        <taxon>Gammaproteobacteria</taxon>
        <taxon>Enterobacterales</taxon>
        <taxon>Enterobacteriaceae</taxon>
        <taxon>Escherichia</taxon>
    </lineage>
</organism>
<evidence type="ECO:0000255" key="1">
    <source>
        <dbReference type="HAMAP-Rule" id="MF_00811"/>
    </source>
</evidence>
<dbReference type="EC" id="2.3.1.117" evidence="1"/>
<dbReference type="EMBL" id="CP000243">
    <property type="protein sequence ID" value="ABE05690.1"/>
    <property type="molecule type" value="Genomic_DNA"/>
</dbReference>
<dbReference type="RefSeq" id="WP_001186656.1">
    <property type="nucleotide sequence ID" value="NZ_CP064825.1"/>
</dbReference>
<dbReference type="SMR" id="Q1RG24"/>
<dbReference type="KEGG" id="eci:UTI89_C0180"/>
<dbReference type="HOGENOM" id="CLU_050859_0_1_6"/>
<dbReference type="UniPathway" id="UPA00034">
    <property type="reaction ID" value="UER00019"/>
</dbReference>
<dbReference type="Proteomes" id="UP000001952">
    <property type="component" value="Chromosome"/>
</dbReference>
<dbReference type="GO" id="GO:0005737">
    <property type="term" value="C:cytoplasm"/>
    <property type="evidence" value="ECO:0007669"/>
    <property type="project" value="UniProtKB-SubCell"/>
</dbReference>
<dbReference type="GO" id="GO:0008666">
    <property type="term" value="F:2,3,4,5-tetrahydropyridine-2,6-dicarboxylate N-succinyltransferase activity"/>
    <property type="evidence" value="ECO:0007669"/>
    <property type="project" value="UniProtKB-UniRule"/>
</dbReference>
<dbReference type="GO" id="GO:0016779">
    <property type="term" value="F:nucleotidyltransferase activity"/>
    <property type="evidence" value="ECO:0007669"/>
    <property type="project" value="TreeGrafter"/>
</dbReference>
<dbReference type="GO" id="GO:0019877">
    <property type="term" value="P:diaminopimelate biosynthetic process"/>
    <property type="evidence" value="ECO:0007669"/>
    <property type="project" value="UniProtKB-UniRule"/>
</dbReference>
<dbReference type="GO" id="GO:0009089">
    <property type="term" value="P:lysine biosynthetic process via diaminopimelate"/>
    <property type="evidence" value="ECO:0007669"/>
    <property type="project" value="UniProtKB-UniRule"/>
</dbReference>
<dbReference type="CDD" id="cd03350">
    <property type="entry name" value="LbH_THP_succinylT"/>
    <property type="match status" value="1"/>
</dbReference>
<dbReference type="FunFam" id="1.10.166.10:FF:000001">
    <property type="entry name" value="2,3,4,5-tetrahydropyridine-2,6-dicarboxylate N-succinyltransferase"/>
    <property type="match status" value="1"/>
</dbReference>
<dbReference type="FunFam" id="2.160.10.10:FF:000004">
    <property type="entry name" value="2,3,4,5-tetrahydropyridine-2,6-dicarboxylate N-succinyltransferase"/>
    <property type="match status" value="1"/>
</dbReference>
<dbReference type="Gene3D" id="2.160.10.10">
    <property type="entry name" value="Hexapeptide repeat proteins"/>
    <property type="match status" value="1"/>
</dbReference>
<dbReference type="Gene3D" id="1.10.166.10">
    <property type="entry name" value="Tetrahydrodipicolinate-N-succinyltransferase, N-terminal domain"/>
    <property type="match status" value="1"/>
</dbReference>
<dbReference type="HAMAP" id="MF_00811">
    <property type="entry name" value="DapD"/>
    <property type="match status" value="1"/>
</dbReference>
<dbReference type="InterPro" id="IPR005664">
    <property type="entry name" value="DapD_Trfase_Hexpep_rpt_fam"/>
</dbReference>
<dbReference type="InterPro" id="IPR001451">
    <property type="entry name" value="Hexapep"/>
</dbReference>
<dbReference type="InterPro" id="IPR018357">
    <property type="entry name" value="Hexapep_transf_CS"/>
</dbReference>
<dbReference type="InterPro" id="IPR023180">
    <property type="entry name" value="THP_succinylTrfase_dom1"/>
</dbReference>
<dbReference type="InterPro" id="IPR037133">
    <property type="entry name" value="THP_succinylTrfase_N_sf"/>
</dbReference>
<dbReference type="InterPro" id="IPR011004">
    <property type="entry name" value="Trimer_LpxA-like_sf"/>
</dbReference>
<dbReference type="NCBIfam" id="TIGR00965">
    <property type="entry name" value="dapD"/>
    <property type="match status" value="1"/>
</dbReference>
<dbReference type="NCBIfam" id="NF008808">
    <property type="entry name" value="PRK11830.1"/>
    <property type="match status" value="1"/>
</dbReference>
<dbReference type="PANTHER" id="PTHR19136:SF52">
    <property type="entry name" value="2,3,4,5-TETRAHYDROPYRIDINE-2,6-DICARBOXYLATE N-SUCCINYLTRANSFERASE"/>
    <property type="match status" value="1"/>
</dbReference>
<dbReference type="PANTHER" id="PTHR19136">
    <property type="entry name" value="MOLYBDENUM COFACTOR GUANYLYLTRANSFERASE"/>
    <property type="match status" value="1"/>
</dbReference>
<dbReference type="Pfam" id="PF14602">
    <property type="entry name" value="Hexapep_2"/>
    <property type="match status" value="1"/>
</dbReference>
<dbReference type="Pfam" id="PF14805">
    <property type="entry name" value="THDPS_N_2"/>
    <property type="match status" value="1"/>
</dbReference>
<dbReference type="SUPFAM" id="SSF51161">
    <property type="entry name" value="Trimeric LpxA-like enzymes"/>
    <property type="match status" value="1"/>
</dbReference>
<dbReference type="PROSITE" id="PS00101">
    <property type="entry name" value="HEXAPEP_TRANSFERASES"/>
    <property type="match status" value="1"/>
</dbReference>
<comment type="catalytic activity">
    <reaction evidence="1">
        <text>(S)-2,3,4,5-tetrahydrodipicolinate + succinyl-CoA + H2O = (S)-2-succinylamino-6-oxoheptanedioate + CoA</text>
        <dbReference type="Rhea" id="RHEA:17325"/>
        <dbReference type="ChEBI" id="CHEBI:15377"/>
        <dbReference type="ChEBI" id="CHEBI:15685"/>
        <dbReference type="ChEBI" id="CHEBI:16845"/>
        <dbReference type="ChEBI" id="CHEBI:57287"/>
        <dbReference type="ChEBI" id="CHEBI:57292"/>
        <dbReference type="EC" id="2.3.1.117"/>
    </reaction>
</comment>
<comment type="pathway">
    <text evidence="1">Amino-acid biosynthesis; L-lysine biosynthesis via DAP pathway; LL-2,6-diaminopimelate from (S)-tetrahydrodipicolinate (succinylase route): step 1/3.</text>
</comment>
<comment type="subunit">
    <text evidence="1">Homotrimer.</text>
</comment>
<comment type="subcellular location">
    <subcellularLocation>
        <location evidence="1">Cytoplasm</location>
    </subcellularLocation>
</comment>
<comment type="similarity">
    <text evidence="1">Belongs to the transferase hexapeptide repeat family.</text>
</comment>